<accession>P0C9R4</accession>
<dbReference type="EMBL" id="AY261363">
    <property type="status" value="NOT_ANNOTATED_CDS"/>
    <property type="molecule type" value="Genomic_DNA"/>
</dbReference>
<dbReference type="Proteomes" id="UP000000859">
    <property type="component" value="Segment"/>
</dbReference>
<dbReference type="GO" id="GO:0042330">
    <property type="term" value="P:taxis"/>
    <property type="evidence" value="ECO:0007669"/>
    <property type="project" value="InterPro"/>
</dbReference>
<dbReference type="InterPro" id="IPR002595">
    <property type="entry name" value="ASFV_MGF360"/>
</dbReference>
<dbReference type="Pfam" id="PF01671">
    <property type="entry name" value="ASFV_360"/>
    <property type="match status" value="1"/>
</dbReference>
<proteinExistence type="inferred from homology"/>
<evidence type="ECO:0000250" key="1">
    <source>
        <dbReference type="UniProtKB" id="P23163"/>
    </source>
</evidence>
<evidence type="ECO:0000305" key="2"/>
<gene>
    <name type="ordered locus">Pret-160</name>
</gene>
<organism>
    <name type="scientific">African swine fever virus (isolate Tick/South Africa/Pretoriuskop Pr4/1996)</name>
    <name type="common">ASFV</name>
    <dbReference type="NCBI Taxonomy" id="561443"/>
    <lineage>
        <taxon>Viruses</taxon>
        <taxon>Varidnaviria</taxon>
        <taxon>Bamfordvirae</taxon>
        <taxon>Nucleocytoviricota</taxon>
        <taxon>Pokkesviricetes</taxon>
        <taxon>Asfuvirales</taxon>
        <taxon>Asfarviridae</taxon>
        <taxon>Asfivirus</taxon>
        <taxon>African swine fever virus</taxon>
    </lineage>
</organism>
<sequence>MLSLQTIAKMAVATNTYSKCHYPILKVFGLWWKNNTLNGPIKICNHCNNIMVGEYPMCYNHGMSLDIALIRAVKERNMSLVQLFTEWGGNIDYGALCANTPSMQRLCESLGAKPPKGRMYMDTLIHFSDTLNDNDLIRGYEIFDDNSVLDCVNLIRLKIMLTLKARISLMEQLDQIALKQLLQRYWYAMAVQHNLTIAIHYFDNHIPNIKPFSLRCALYFNDPFKIHDACRTVNMDPNEMMNIACQQDLNFQSIYYCYLLGADINQAMLMSLKYGHLSNMWFCIDLGADAFKEAGVLAGKKNRRVLQYILGLNIFKRELIPPCKDPDPYQIQILLKNYILKNVSTVFTYYCQ</sequence>
<organismHost>
    <name type="scientific">Ornithodoros</name>
    <name type="common">relapsing fever ticks</name>
    <dbReference type="NCBI Taxonomy" id="6937"/>
</organismHost>
<organismHost>
    <name type="scientific">Phacochoerus aethiopicus</name>
    <name type="common">Warthog</name>
    <dbReference type="NCBI Taxonomy" id="85517"/>
</organismHost>
<organismHost>
    <name type="scientific">Phacochoerus africanus</name>
    <name type="common">Warthog</name>
    <dbReference type="NCBI Taxonomy" id="41426"/>
</organismHost>
<organismHost>
    <name type="scientific">Potamochoerus larvatus</name>
    <name type="common">Bushpig</name>
    <dbReference type="NCBI Taxonomy" id="273792"/>
</organismHost>
<organismHost>
    <name type="scientific">Sus scrofa</name>
    <name type="common">Pig</name>
    <dbReference type="NCBI Taxonomy" id="9823"/>
</organismHost>
<name>36016_ASFP4</name>
<reference key="1">
    <citation type="submission" date="2003-03" db="EMBL/GenBank/DDBJ databases">
        <title>African swine fever virus genomes.</title>
        <authorList>
            <person name="Kutish G.F."/>
            <person name="Rock D.L."/>
        </authorList>
    </citation>
    <scope>NUCLEOTIDE SEQUENCE [LARGE SCALE GENOMIC DNA]</scope>
</reference>
<comment type="function">
    <text evidence="1">Plays a role in virus cell tropism, and may be required for efficient virus replication in macrophages.</text>
</comment>
<comment type="induction">
    <text evidence="2">Expressed in the early phase of the viral replicative cycle.</text>
</comment>
<comment type="similarity">
    <text evidence="2">Belongs to the asfivirus MGF 360 family.</text>
</comment>
<feature type="chain" id="PRO_0000373299" description="Protein MGF 360-16R">
    <location>
        <begin position="1"/>
        <end position="352"/>
    </location>
</feature>
<keyword id="KW-0244">Early protein</keyword>
<protein>
    <recommendedName>
        <fullName>Protein MGF 360-16R</fullName>
    </recommendedName>
</protein>